<proteinExistence type="inferred from homology"/>
<evidence type="ECO:0000255" key="1">
    <source>
        <dbReference type="HAMAP-Rule" id="MF_01371"/>
    </source>
</evidence>
<evidence type="ECO:0000305" key="2"/>
<accession>A0LRN8</accession>
<dbReference type="EMBL" id="CP000481">
    <property type="protein sequence ID" value="ABK52098.1"/>
    <property type="molecule type" value="Genomic_DNA"/>
</dbReference>
<dbReference type="RefSeq" id="WP_011719161.1">
    <property type="nucleotide sequence ID" value="NC_008578.1"/>
</dbReference>
<dbReference type="SMR" id="A0LRN8"/>
<dbReference type="FunCoup" id="A0LRN8">
    <property type="interactions" value="81"/>
</dbReference>
<dbReference type="STRING" id="351607.Acel_0324"/>
<dbReference type="KEGG" id="ace:Acel_0324"/>
<dbReference type="eggNOG" id="COG1841">
    <property type="taxonomic scope" value="Bacteria"/>
</dbReference>
<dbReference type="HOGENOM" id="CLU_131047_2_1_11"/>
<dbReference type="InParanoid" id="A0LRN8"/>
<dbReference type="OrthoDB" id="9812790at2"/>
<dbReference type="Proteomes" id="UP000008221">
    <property type="component" value="Chromosome"/>
</dbReference>
<dbReference type="GO" id="GO:0022625">
    <property type="term" value="C:cytosolic large ribosomal subunit"/>
    <property type="evidence" value="ECO:0007669"/>
    <property type="project" value="TreeGrafter"/>
</dbReference>
<dbReference type="GO" id="GO:0003735">
    <property type="term" value="F:structural constituent of ribosome"/>
    <property type="evidence" value="ECO:0007669"/>
    <property type="project" value="InterPro"/>
</dbReference>
<dbReference type="GO" id="GO:0006412">
    <property type="term" value="P:translation"/>
    <property type="evidence" value="ECO:0007669"/>
    <property type="project" value="UniProtKB-UniRule"/>
</dbReference>
<dbReference type="CDD" id="cd01658">
    <property type="entry name" value="Ribosomal_L30"/>
    <property type="match status" value="1"/>
</dbReference>
<dbReference type="FunFam" id="3.30.1390.20:FF:000001">
    <property type="entry name" value="50S ribosomal protein L30"/>
    <property type="match status" value="1"/>
</dbReference>
<dbReference type="Gene3D" id="3.30.1390.20">
    <property type="entry name" value="Ribosomal protein L30, ferredoxin-like fold domain"/>
    <property type="match status" value="1"/>
</dbReference>
<dbReference type="HAMAP" id="MF_01371_B">
    <property type="entry name" value="Ribosomal_uL30_B"/>
    <property type="match status" value="1"/>
</dbReference>
<dbReference type="InterPro" id="IPR036919">
    <property type="entry name" value="Ribo_uL30_ferredoxin-like_sf"/>
</dbReference>
<dbReference type="InterPro" id="IPR005996">
    <property type="entry name" value="Ribosomal_uL30_bac-type"/>
</dbReference>
<dbReference type="InterPro" id="IPR016082">
    <property type="entry name" value="Ribosomal_uL30_ferredoxin-like"/>
</dbReference>
<dbReference type="NCBIfam" id="TIGR01308">
    <property type="entry name" value="rpmD_bact"/>
    <property type="match status" value="1"/>
</dbReference>
<dbReference type="PANTHER" id="PTHR15892:SF2">
    <property type="entry name" value="LARGE RIBOSOMAL SUBUNIT PROTEIN UL30M"/>
    <property type="match status" value="1"/>
</dbReference>
<dbReference type="PANTHER" id="PTHR15892">
    <property type="entry name" value="MITOCHONDRIAL RIBOSOMAL PROTEIN L30"/>
    <property type="match status" value="1"/>
</dbReference>
<dbReference type="Pfam" id="PF00327">
    <property type="entry name" value="Ribosomal_L30"/>
    <property type="match status" value="1"/>
</dbReference>
<dbReference type="PIRSF" id="PIRSF002211">
    <property type="entry name" value="Ribosomal_L30_bac-type"/>
    <property type="match status" value="1"/>
</dbReference>
<dbReference type="SUPFAM" id="SSF55129">
    <property type="entry name" value="Ribosomal protein L30p/L7e"/>
    <property type="match status" value="1"/>
</dbReference>
<name>RL30_ACIC1</name>
<feature type="chain" id="PRO_1000055999" description="Large ribosomal subunit protein uL30">
    <location>
        <begin position="1"/>
        <end position="60"/>
    </location>
</feature>
<organism>
    <name type="scientific">Acidothermus cellulolyticus (strain ATCC 43068 / DSM 8971 / 11B)</name>
    <dbReference type="NCBI Taxonomy" id="351607"/>
    <lineage>
        <taxon>Bacteria</taxon>
        <taxon>Bacillati</taxon>
        <taxon>Actinomycetota</taxon>
        <taxon>Actinomycetes</taxon>
        <taxon>Acidothermales</taxon>
        <taxon>Acidothermaceae</taxon>
        <taxon>Acidothermus</taxon>
    </lineage>
</organism>
<keyword id="KW-1185">Reference proteome</keyword>
<keyword id="KW-0687">Ribonucleoprotein</keyword>
<keyword id="KW-0689">Ribosomal protein</keyword>
<comment type="subunit">
    <text evidence="1">Part of the 50S ribosomal subunit.</text>
</comment>
<comment type="similarity">
    <text evidence="1">Belongs to the universal ribosomal protein uL30 family.</text>
</comment>
<gene>
    <name evidence="1" type="primary">rpmD</name>
    <name type="ordered locus">Acel_0324</name>
</gene>
<reference key="1">
    <citation type="journal article" date="2009" name="Genome Res.">
        <title>Complete genome of the cellulolytic thermophile Acidothermus cellulolyticus 11B provides insights into its ecophysiological and evolutionary adaptations.</title>
        <authorList>
            <person name="Barabote R.D."/>
            <person name="Xie G."/>
            <person name="Leu D.H."/>
            <person name="Normand P."/>
            <person name="Necsulea A."/>
            <person name="Daubin V."/>
            <person name="Medigue C."/>
            <person name="Adney W.S."/>
            <person name="Xu X.C."/>
            <person name="Lapidus A."/>
            <person name="Parales R.E."/>
            <person name="Detter C."/>
            <person name="Pujic P."/>
            <person name="Bruce D."/>
            <person name="Lavire C."/>
            <person name="Challacombe J.F."/>
            <person name="Brettin T.S."/>
            <person name="Berry A.M."/>
        </authorList>
    </citation>
    <scope>NUCLEOTIDE SEQUENCE [LARGE SCALE GENOMIC DNA]</scope>
    <source>
        <strain>ATCC 43068 / DSM 8971 / 11B</strain>
    </source>
</reference>
<sequence length="60" mass="6823">MPRLKVTQVRSGIGGTAEQRDTLRSLGLKRLRDTVVKEDRPEIRGMIRAVAHLVRVEEVE</sequence>
<protein>
    <recommendedName>
        <fullName evidence="1">Large ribosomal subunit protein uL30</fullName>
    </recommendedName>
    <alternativeName>
        <fullName evidence="2">50S ribosomal protein L30</fullName>
    </alternativeName>
</protein>